<organism>
    <name type="scientific">Xanthomonas euvesicatoria pv. vesicatoria (strain 85-10)</name>
    <name type="common">Xanthomonas campestris pv. vesicatoria</name>
    <dbReference type="NCBI Taxonomy" id="316273"/>
    <lineage>
        <taxon>Bacteria</taxon>
        <taxon>Pseudomonadati</taxon>
        <taxon>Pseudomonadota</taxon>
        <taxon>Gammaproteobacteria</taxon>
        <taxon>Lysobacterales</taxon>
        <taxon>Lysobacteraceae</taxon>
        <taxon>Xanthomonas</taxon>
    </lineage>
</organism>
<keyword id="KW-0067">ATP-binding</keyword>
<keyword id="KW-0963">Cytoplasm</keyword>
<keyword id="KW-0324">Glycolysis</keyword>
<keyword id="KW-0418">Kinase</keyword>
<keyword id="KW-0547">Nucleotide-binding</keyword>
<keyword id="KW-0808">Transferase</keyword>
<dbReference type="EC" id="2.7.1.2" evidence="1"/>
<dbReference type="EMBL" id="AM039952">
    <property type="protein sequence ID" value="CAJ23913.1"/>
    <property type="molecule type" value="Genomic_DNA"/>
</dbReference>
<dbReference type="RefSeq" id="WP_005929801.1">
    <property type="nucleotide sequence ID" value="NZ_CP017190.1"/>
</dbReference>
<dbReference type="SMR" id="Q3BTE6"/>
<dbReference type="STRING" id="456327.BJD11_11210"/>
<dbReference type="GeneID" id="97510556"/>
<dbReference type="KEGG" id="xcv:XCV2236"/>
<dbReference type="eggNOG" id="COG0837">
    <property type="taxonomic scope" value="Bacteria"/>
</dbReference>
<dbReference type="HOGENOM" id="CLU_042582_1_0_6"/>
<dbReference type="Proteomes" id="UP000007069">
    <property type="component" value="Chromosome"/>
</dbReference>
<dbReference type="GO" id="GO:0005829">
    <property type="term" value="C:cytosol"/>
    <property type="evidence" value="ECO:0007669"/>
    <property type="project" value="TreeGrafter"/>
</dbReference>
<dbReference type="GO" id="GO:0005524">
    <property type="term" value="F:ATP binding"/>
    <property type="evidence" value="ECO:0007669"/>
    <property type="project" value="UniProtKB-UniRule"/>
</dbReference>
<dbReference type="GO" id="GO:0005536">
    <property type="term" value="F:D-glucose binding"/>
    <property type="evidence" value="ECO:0007669"/>
    <property type="project" value="InterPro"/>
</dbReference>
<dbReference type="GO" id="GO:0004340">
    <property type="term" value="F:glucokinase activity"/>
    <property type="evidence" value="ECO:0007669"/>
    <property type="project" value="UniProtKB-UniRule"/>
</dbReference>
<dbReference type="GO" id="GO:0006096">
    <property type="term" value="P:glycolytic process"/>
    <property type="evidence" value="ECO:0007669"/>
    <property type="project" value="UniProtKB-UniRule"/>
</dbReference>
<dbReference type="CDD" id="cd24008">
    <property type="entry name" value="ASKHA_NBD_GLK"/>
    <property type="match status" value="1"/>
</dbReference>
<dbReference type="FunFam" id="3.40.367.20:FF:000007">
    <property type="entry name" value="Glucokinase"/>
    <property type="match status" value="1"/>
</dbReference>
<dbReference type="Gene3D" id="3.30.420.40">
    <property type="match status" value="1"/>
</dbReference>
<dbReference type="Gene3D" id="3.40.367.20">
    <property type="match status" value="1"/>
</dbReference>
<dbReference type="HAMAP" id="MF_00524">
    <property type="entry name" value="Glucokinase"/>
    <property type="match status" value="1"/>
</dbReference>
<dbReference type="InterPro" id="IPR043129">
    <property type="entry name" value="ATPase_NBD"/>
</dbReference>
<dbReference type="InterPro" id="IPR050201">
    <property type="entry name" value="Bacterial_glucokinase"/>
</dbReference>
<dbReference type="InterPro" id="IPR003836">
    <property type="entry name" value="Glucokinase"/>
</dbReference>
<dbReference type="NCBIfam" id="TIGR00749">
    <property type="entry name" value="glk"/>
    <property type="match status" value="1"/>
</dbReference>
<dbReference type="PANTHER" id="PTHR47690">
    <property type="entry name" value="GLUCOKINASE"/>
    <property type="match status" value="1"/>
</dbReference>
<dbReference type="PANTHER" id="PTHR47690:SF1">
    <property type="entry name" value="GLUCOKINASE"/>
    <property type="match status" value="1"/>
</dbReference>
<dbReference type="Pfam" id="PF02685">
    <property type="entry name" value="Glucokinase"/>
    <property type="match status" value="1"/>
</dbReference>
<dbReference type="SUPFAM" id="SSF53067">
    <property type="entry name" value="Actin-like ATPase domain"/>
    <property type="match status" value="1"/>
</dbReference>
<feature type="chain" id="PRO_0000268791" description="Glucokinase">
    <location>
        <begin position="1"/>
        <end position="335"/>
    </location>
</feature>
<feature type="binding site" evidence="1">
    <location>
        <begin position="11"/>
        <end position="16"/>
    </location>
    <ligand>
        <name>ATP</name>
        <dbReference type="ChEBI" id="CHEBI:30616"/>
    </ligand>
</feature>
<accession>Q3BTE6</accession>
<proteinExistence type="inferred from homology"/>
<reference key="1">
    <citation type="journal article" date="2005" name="J. Bacteriol.">
        <title>Insights into genome plasticity and pathogenicity of the plant pathogenic Bacterium Xanthomonas campestris pv. vesicatoria revealed by the complete genome sequence.</title>
        <authorList>
            <person name="Thieme F."/>
            <person name="Koebnik R."/>
            <person name="Bekel T."/>
            <person name="Berger C."/>
            <person name="Boch J."/>
            <person name="Buettner D."/>
            <person name="Caldana C."/>
            <person name="Gaigalat L."/>
            <person name="Goesmann A."/>
            <person name="Kay S."/>
            <person name="Kirchner O."/>
            <person name="Lanz C."/>
            <person name="Linke B."/>
            <person name="McHardy A.C."/>
            <person name="Meyer F."/>
            <person name="Mittenhuber G."/>
            <person name="Nies D.H."/>
            <person name="Niesbach-Kloesgen U."/>
            <person name="Patschkowski T."/>
            <person name="Rueckert C."/>
            <person name="Rupp O."/>
            <person name="Schneiker S."/>
            <person name="Schuster S.C."/>
            <person name="Vorhoelter F.J."/>
            <person name="Weber E."/>
            <person name="Puehler A."/>
            <person name="Bonas U."/>
            <person name="Bartels D."/>
            <person name="Kaiser O."/>
        </authorList>
    </citation>
    <scope>NUCLEOTIDE SEQUENCE [LARGE SCALE GENOMIC DNA]</scope>
    <source>
        <strain>85-10</strain>
    </source>
</reference>
<protein>
    <recommendedName>
        <fullName evidence="1">Glucokinase</fullName>
        <ecNumber evidence="1">2.7.1.2</ecNumber>
    </recommendedName>
    <alternativeName>
        <fullName evidence="1">Glucose kinase</fullName>
    </alternativeName>
</protein>
<gene>
    <name evidence="1" type="primary">glk</name>
    <name type="ordered locus">XCV2236</name>
</gene>
<sequence length="335" mass="35518">MTAPSKPVLVADIGGTNARFALADVDASVPLLDDTSREFAVVDFGSLGEAARYYLDQIGVQATQGVFAVAGRVDGDEARITNHPWVISRSRTATMLGFSTLHLINDFAAQAMAISLLRPQDVVQVGGASWRPAPIDQARNYGVIGPGTGLGVGGLIIRNGRCFPLETEGGHVSFPPGTPEEIRILEILSEQFGRVSNERLICGPGLVNIHRALSEIAGVDPGPLQPKDITARAAAGDPRSSRTIDLFCAIFGAIAGDMVLMQGAWDGVFLTGGLVPKVLDSLQHSGFRQRFEHKGRFSAIMSKVPSLAVMHPHAGLLGAAAYAVDAQRQHPGEQR</sequence>
<comment type="catalytic activity">
    <reaction evidence="1">
        <text>D-glucose + ATP = D-glucose 6-phosphate + ADP + H(+)</text>
        <dbReference type="Rhea" id="RHEA:17825"/>
        <dbReference type="ChEBI" id="CHEBI:4167"/>
        <dbReference type="ChEBI" id="CHEBI:15378"/>
        <dbReference type="ChEBI" id="CHEBI:30616"/>
        <dbReference type="ChEBI" id="CHEBI:61548"/>
        <dbReference type="ChEBI" id="CHEBI:456216"/>
        <dbReference type="EC" id="2.7.1.2"/>
    </reaction>
</comment>
<comment type="subcellular location">
    <subcellularLocation>
        <location evidence="1">Cytoplasm</location>
    </subcellularLocation>
</comment>
<comment type="similarity">
    <text evidence="1">Belongs to the bacterial glucokinase family.</text>
</comment>
<name>GLK_XANE5</name>
<evidence type="ECO:0000255" key="1">
    <source>
        <dbReference type="HAMAP-Rule" id="MF_00524"/>
    </source>
</evidence>